<sequence>MLHTRIRRATLGAVAALSLVPVMACGQESSADAAEPAGSAPSSSAAAHKPGEVEPYAAELKALEDEFDVRLGVYAVDTGSGREVAYRDGERFPYNSTFKALECGAVLDKHTDREMDRVVKYSEDDLVDNSPVTEKHVEDGMTLTALCDAAVRYSDNTAANLLFETVGGPKGLDKTLEGLGDHVTRMERVEPFLSRWEPGSKRDTSTPRAFAKDLRAYVLGDVLAEGDRKQLTTWLRNNTTGDGLIRAGVRQGWVVGDKTGTGSYYGARNDMAVVWRPDGRPLVLNVMVHGHTKDAELDSELIARATEVVADRLG</sequence>
<organism>
    <name type="scientific">Streptomyces cacaoi</name>
    <dbReference type="NCBI Taxonomy" id="1898"/>
    <lineage>
        <taxon>Bacteria</taxon>
        <taxon>Bacillati</taxon>
        <taxon>Actinomycetota</taxon>
        <taxon>Actinomycetes</taxon>
        <taxon>Kitasatosporales</taxon>
        <taxon>Streptomycetaceae</taxon>
        <taxon>Streptomyces</taxon>
    </lineage>
</organism>
<name>BLA2_STRCI</name>
<protein>
    <recommendedName>
        <fullName>Beta-lactamase 2</fullName>
        <ecNumber>3.5.2.6</ecNumber>
    </recommendedName>
    <alternativeName>
        <fullName>Penicillinase</fullName>
    </alternativeName>
</protein>
<accession>P14560</accession>
<keyword id="KW-0046">Antibiotic resistance</keyword>
<keyword id="KW-0378">Hydrolase</keyword>
<keyword id="KW-0732">Signal</keyword>
<evidence type="ECO:0000250" key="1"/>
<evidence type="ECO:0000255" key="2">
    <source>
        <dbReference type="PROSITE-ProRule" id="PRU10101"/>
    </source>
</evidence>
<evidence type="ECO:0000256" key="3">
    <source>
        <dbReference type="SAM" id="MobiDB-lite"/>
    </source>
</evidence>
<evidence type="ECO:0000305" key="4"/>
<evidence type="ECO:0000305" key="5">
    <source>
    </source>
</evidence>
<reference key="1">
    <citation type="journal article" date="1989" name="Mol. Microbiol.">
        <title>Transcriptional induction of Streptomyces cacaoi beta-lactamase by a beta-lactam compound.</title>
        <authorList>
            <person name="Forsman M."/>
            <person name="Lindgren L."/>
            <person name="Haeggstroem B."/>
            <person name="Jaurin B."/>
        </authorList>
    </citation>
    <scope>NUCLEOTIDE SEQUENCE [GENOMIC DNA]</scope>
    <source>
        <strain>ATCC 3082 / DSM 40057 / JCM 4352 / BCRC 12103 / KCC S-0352 / LMG 19320 / NBRC 12748 / NCIMB 9626 / IMRU 3082</strain>
    </source>
</reference>
<reference key="2">
    <citation type="journal article" date="1991" name="Biochem. J.">
        <title>A standard numbering scheme for the class A beta-lactamases.</title>
        <authorList>
            <person name="Ambler R.P."/>
            <person name="Coulson A.F."/>
            <person name="Frere J.M."/>
            <person name="Ghuysen J.M."/>
            <person name="Joris B."/>
            <person name="Forsman M."/>
            <person name="Levesque R.C."/>
            <person name="Tiraby G."/>
            <person name="Waley S.G."/>
        </authorList>
    </citation>
    <scope>AMINO ACID NUMBERING SCHEME</scope>
</reference>
<reference key="3">
    <citation type="journal article" date="1992" name="FEMS Microbiol. Lett.">
        <title>Two different beta-lactamase genes are present in Streptomyces cacaoi.</title>
        <authorList>
            <person name="Magdalena J."/>
            <person name="Forsman M."/>
            <person name="Lenzini M.V."/>
            <person name="Brans A."/>
            <person name="Dusart J."/>
        </authorList>
    </citation>
    <scope>COMPARISON OF BLAU AND BLAL</scope>
</reference>
<gene>
    <name type="primary">blaU</name>
</gene>
<dbReference type="EC" id="3.5.2.6"/>
<dbReference type="EMBL" id="X15708">
    <property type="protein sequence ID" value="CAA33739.1"/>
    <property type="molecule type" value="Genomic_DNA"/>
</dbReference>
<dbReference type="PIR" id="S06967">
    <property type="entry name" value="S06967"/>
</dbReference>
<dbReference type="SMR" id="P14560"/>
<dbReference type="GO" id="GO:0008800">
    <property type="term" value="F:beta-lactamase activity"/>
    <property type="evidence" value="ECO:0007669"/>
    <property type="project" value="UniProtKB-EC"/>
</dbReference>
<dbReference type="GO" id="GO:0030655">
    <property type="term" value="P:beta-lactam antibiotic catabolic process"/>
    <property type="evidence" value="ECO:0007669"/>
    <property type="project" value="InterPro"/>
</dbReference>
<dbReference type="GO" id="GO:0046677">
    <property type="term" value="P:response to antibiotic"/>
    <property type="evidence" value="ECO:0007669"/>
    <property type="project" value="UniProtKB-KW"/>
</dbReference>
<dbReference type="Gene3D" id="3.40.710.10">
    <property type="entry name" value="DD-peptidase/beta-lactamase superfamily"/>
    <property type="match status" value="1"/>
</dbReference>
<dbReference type="InterPro" id="IPR012338">
    <property type="entry name" value="Beta-lactam/transpept-like"/>
</dbReference>
<dbReference type="InterPro" id="IPR045155">
    <property type="entry name" value="Beta-lactam_cat"/>
</dbReference>
<dbReference type="InterPro" id="IPR000871">
    <property type="entry name" value="Beta-lactam_class-A"/>
</dbReference>
<dbReference type="InterPro" id="IPR023650">
    <property type="entry name" value="Beta-lactam_class-A_AS"/>
</dbReference>
<dbReference type="NCBIfam" id="NF033103">
    <property type="entry name" value="bla_class_A"/>
    <property type="match status" value="1"/>
</dbReference>
<dbReference type="PANTHER" id="PTHR35333">
    <property type="entry name" value="BETA-LACTAMASE"/>
    <property type="match status" value="1"/>
</dbReference>
<dbReference type="PANTHER" id="PTHR35333:SF3">
    <property type="entry name" value="BETA-LACTAMASE-TYPE TRANSPEPTIDASE FOLD CONTAINING PROTEIN"/>
    <property type="match status" value="1"/>
</dbReference>
<dbReference type="Pfam" id="PF13354">
    <property type="entry name" value="Beta-lactamase2"/>
    <property type="match status" value="1"/>
</dbReference>
<dbReference type="PRINTS" id="PR00118">
    <property type="entry name" value="BLACTAMASEA"/>
</dbReference>
<dbReference type="SUPFAM" id="SSF56601">
    <property type="entry name" value="beta-lactamase/transpeptidase-like"/>
    <property type="match status" value="1"/>
</dbReference>
<dbReference type="PROSITE" id="PS00146">
    <property type="entry name" value="BETA_LACTAMASE_A"/>
    <property type="match status" value="1"/>
</dbReference>
<proteinExistence type="inferred from homology"/>
<feature type="signal peptide">
    <location>
        <begin position="1"/>
        <end position="26"/>
    </location>
</feature>
<feature type="chain" id="PRO_0000017017" description="Beta-lactamase 2">
    <location>
        <begin position="27"/>
        <end position="314"/>
    </location>
</feature>
<feature type="region of interest" description="Disordered" evidence="3">
    <location>
        <begin position="32"/>
        <end position="51"/>
    </location>
</feature>
<feature type="compositionally biased region" description="Low complexity" evidence="3">
    <location>
        <begin position="32"/>
        <end position="47"/>
    </location>
</feature>
<feature type="active site" description="Acyl-ester intermediate">
    <location>
        <position position="96"/>
    </location>
</feature>
<feature type="binding site" evidence="1">
    <location>
        <begin position="258"/>
        <end position="260"/>
    </location>
    <ligand>
        <name>substrate</name>
    </ligand>
</feature>
<comment type="catalytic activity">
    <reaction evidence="2">
        <text>a beta-lactam + H2O = a substituted beta-amino acid</text>
        <dbReference type="Rhea" id="RHEA:20401"/>
        <dbReference type="ChEBI" id="CHEBI:15377"/>
        <dbReference type="ChEBI" id="CHEBI:35627"/>
        <dbReference type="ChEBI" id="CHEBI:140347"/>
        <dbReference type="EC" id="3.5.2.6"/>
    </reaction>
</comment>
<comment type="miscellaneous">
    <text evidence="5">The class A beta-lactamase family has a specific amino-acid numbering system, sometimes called Ambler or ABL numbering and often misspelt as Amber. A multiple sequence alignment was used to derive a consensus sequence and then the consensus was numbered taking into account insertions and deletions. This allows use of identical numbers, e.g. for active site residues, despite differences in protein length. UniProt always uses natural numbering of residues, hence there appear to be differences in numbering between this entry and some papers.</text>
</comment>
<comment type="similarity">
    <text evidence="4">Belongs to the class-A beta-lactamase family.</text>
</comment>